<evidence type="ECO:0000250" key="1">
    <source>
        <dbReference type="UniProtKB" id="P25526"/>
    </source>
</evidence>
<evidence type="ECO:0000305" key="2"/>
<feature type="chain" id="PRO_0000293557" description="Putative aldehyde dehydrogenase">
    <location>
        <begin position="1"/>
        <end position="475"/>
    </location>
</feature>
<feature type="active site" description="Proton acceptor" evidence="1">
    <location>
        <position position="245"/>
    </location>
</feature>
<feature type="active site" description="Nucleophile" evidence="1">
    <location>
        <position position="279"/>
    </location>
</feature>
<feature type="binding site" evidence="1">
    <location>
        <begin position="146"/>
        <end position="147"/>
    </location>
    <ligand>
        <name>NAD(+)</name>
        <dbReference type="ChEBI" id="CHEBI:57540"/>
    </ligand>
</feature>
<feature type="binding site" evidence="1">
    <location>
        <begin position="223"/>
        <end position="224"/>
    </location>
    <ligand>
        <name>NAD(+)</name>
        <dbReference type="ChEBI" id="CHEBI:57540"/>
    </ligand>
</feature>
<feature type="binding site" evidence="1">
    <location>
        <position position="246"/>
    </location>
    <ligand>
        <name>NAD(+)</name>
        <dbReference type="ChEBI" id="CHEBI:57540"/>
    </ligand>
</feature>
<feature type="binding site" evidence="1">
    <location>
        <position position="379"/>
    </location>
    <ligand>
        <name>NAD(+)</name>
        <dbReference type="ChEBI" id="CHEBI:57540"/>
    </ligand>
</feature>
<proteinExistence type="inferred from homology"/>
<gene>
    <name type="ordered locus">MW2046</name>
</gene>
<reference key="1">
    <citation type="journal article" date="2002" name="Lancet">
        <title>Genome and virulence determinants of high virulence community-acquired MRSA.</title>
        <authorList>
            <person name="Baba T."/>
            <person name="Takeuchi F."/>
            <person name="Kuroda M."/>
            <person name="Yuzawa H."/>
            <person name="Aoki K."/>
            <person name="Oguchi A."/>
            <person name="Nagai Y."/>
            <person name="Iwama N."/>
            <person name="Asano K."/>
            <person name="Naimi T."/>
            <person name="Kuroda H."/>
            <person name="Cui L."/>
            <person name="Yamamoto K."/>
            <person name="Hiramatsu K."/>
        </authorList>
    </citation>
    <scope>NUCLEOTIDE SEQUENCE [LARGE SCALE GENOMIC DNA]</scope>
    <source>
        <strain>MW2</strain>
    </source>
</reference>
<sequence>MRDYTKQYINGEWVESNSNETIEVINPATEEVIGKVAKGNKADVDKAVEAADNVYLEFRHTSVKERQALLDKIVKEYENRKDDIVQAITDELGAPLSLSERVHYQMGLNHFVAARDALDNYEFEERRGDDLVVKEAIGVSGLITPWNFPTNQTSLKLAAAFAAGSPVVLKPSEETPFAAVILAEIFDKVGVPKGVFNLVNGDGAGVGNPLSEHPKVRMMSFTGSGPTGSKIMEKAAKDFKKVSLELGGKSPYIVLDDVDIKEAAKATTGKVVNNTGQVCTAGTRVLVPKKIKDAFLAELKEQFSQVRVGNPREDGTQVGPIISKKQFDQVQNYINKGIEEGAELFYGGPGKPEGLEKGYFARPTIFINVDNQMTIAQEEIFGPVMSVITYNDLDEAIQIANDTKYGLAGYVIGKDKETLHKVARSIEAGTVEINEAGRKPDLPFGGYKQSGLGREWGDYGIEEFLEVKSIAGYFK</sequence>
<dbReference type="EC" id="1.2.1.3" evidence="2"/>
<dbReference type="EMBL" id="BA000033">
    <property type="protein sequence ID" value="BAB95911.1"/>
    <property type="molecule type" value="Genomic_DNA"/>
</dbReference>
<dbReference type="RefSeq" id="WP_001206105.1">
    <property type="nucleotide sequence ID" value="NC_003923.1"/>
</dbReference>
<dbReference type="SMR" id="Q8NVG4"/>
<dbReference type="KEGG" id="sam:MW2046"/>
<dbReference type="HOGENOM" id="CLU_005391_0_2_9"/>
<dbReference type="GO" id="GO:0004029">
    <property type="term" value="F:aldehyde dehydrogenase (NAD+) activity"/>
    <property type="evidence" value="ECO:0007669"/>
    <property type="project" value="UniProtKB-EC"/>
</dbReference>
<dbReference type="GO" id="GO:0006081">
    <property type="term" value="P:aldehyde metabolic process"/>
    <property type="evidence" value="ECO:0007669"/>
    <property type="project" value="InterPro"/>
</dbReference>
<dbReference type="CDD" id="cd07138">
    <property type="entry name" value="ALDH_CddD_SSP0762"/>
    <property type="match status" value="1"/>
</dbReference>
<dbReference type="FunFam" id="3.40.605.10:FF:000026">
    <property type="entry name" value="Aldehyde dehydrogenase, putative"/>
    <property type="match status" value="1"/>
</dbReference>
<dbReference type="FunFam" id="3.40.309.10:FF:000012">
    <property type="entry name" value="Betaine aldehyde dehydrogenase"/>
    <property type="match status" value="1"/>
</dbReference>
<dbReference type="FunFam" id="3.40.605.10:FF:000007">
    <property type="entry name" value="NAD/NADP-dependent betaine aldehyde dehydrogenase"/>
    <property type="match status" value="1"/>
</dbReference>
<dbReference type="Gene3D" id="3.40.605.10">
    <property type="entry name" value="Aldehyde Dehydrogenase, Chain A, domain 1"/>
    <property type="match status" value="1"/>
</dbReference>
<dbReference type="Gene3D" id="3.40.309.10">
    <property type="entry name" value="Aldehyde Dehydrogenase, Chain A, domain 2"/>
    <property type="match status" value="1"/>
</dbReference>
<dbReference type="InterPro" id="IPR016161">
    <property type="entry name" value="Ald_DH/histidinol_DH"/>
</dbReference>
<dbReference type="InterPro" id="IPR016163">
    <property type="entry name" value="Ald_DH_C"/>
</dbReference>
<dbReference type="InterPro" id="IPR016160">
    <property type="entry name" value="Ald_DH_CS_CYS"/>
</dbReference>
<dbReference type="InterPro" id="IPR029510">
    <property type="entry name" value="Ald_DH_CS_GLU"/>
</dbReference>
<dbReference type="InterPro" id="IPR016162">
    <property type="entry name" value="Ald_DH_N"/>
</dbReference>
<dbReference type="InterPro" id="IPR015590">
    <property type="entry name" value="Aldehyde_DH_dom"/>
</dbReference>
<dbReference type="InterPro" id="IPR012394">
    <property type="entry name" value="Aldehyde_DH_NAD(P)"/>
</dbReference>
<dbReference type="PANTHER" id="PTHR42804">
    <property type="entry name" value="ALDEHYDE DEHYDROGENASE"/>
    <property type="match status" value="1"/>
</dbReference>
<dbReference type="PANTHER" id="PTHR42804:SF1">
    <property type="entry name" value="ALDEHYDE DEHYDROGENASE-RELATED"/>
    <property type="match status" value="1"/>
</dbReference>
<dbReference type="Pfam" id="PF00171">
    <property type="entry name" value="Aldedh"/>
    <property type="match status" value="1"/>
</dbReference>
<dbReference type="PIRSF" id="PIRSF036492">
    <property type="entry name" value="ALDH"/>
    <property type="match status" value="1"/>
</dbReference>
<dbReference type="SUPFAM" id="SSF53720">
    <property type="entry name" value="ALDH-like"/>
    <property type="match status" value="1"/>
</dbReference>
<dbReference type="PROSITE" id="PS00070">
    <property type="entry name" value="ALDEHYDE_DEHYDR_CYS"/>
    <property type="match status" value="1"/>
</dbReference>
<dbReference type="PROSITE" id="PS00687">
    <property type="entry name" value="ALDEHYDE_DEHYDR_GLU"/>
    <property type="match status" value="1"/>
</dbReference>
<comment type="catalytic activity">
    <reaction evidence="2">
        <text>an aldehyde + NAD(+) + H2O = a carboxylate + NADH + 2 H(+)</text>
        <dbReference type="Rhea" id="RHEA:16185"/>
        <dbReference type="ChEBI" id="CHEBI:15377"/>
        <dbReference type="ChEBI" id="CHEBI:15378"/>
        <dbReference type="ChEBI" id="CHEBI:17478"/>
        <dbReference type="ChEBI" id="CHEBI:29067"/>
        <dbReference type="ChEBI" id="CHEBI:57540"/>
        <dbReference type="ChEBI" id="CHEBI:57945"/>
        <dbReference type="EC" id="1.2.1.3"/>
    </reaction>
</comment>
<comment type="similarity">
    <text evidence="2">Belongs to the aldehyde dehydrogenase family.</text>
</comment>
<protein>
    <recommendedName>
        <fullName evidence="2">Putative aldehyde dehydrogenase</fullName>
        <ecNumber evidence="2">1.2.1.3</ecNumber>
    </recommendedName>
</protein>
<accession>Q8NVG4</accession>
<keyword id="KW-0520">NAD</keyword>
<keyword id="KW-0560">Oxidoreductase</keyword>
<name>ALDH_STAAW</name>
<organism>
    <name type="scientific">Staphylococcus aureus (strain MW2)</name>
    <dbReference type="NCBI Taxonomy" id="196620"/>
    <lineage>
        <taxon>Bacteria</taxon>
        <taxon>Bacillati</taxon>
        <taxon>Bacillota</taxon>
        <taxon>Bacilli</taxon>
        <taxon>Bacillales</taxon>
        <taxon>Staphylococcaceae</taxon>
        <taxon>Staphylococcus</taxon>
    </lineage>
</organism>